<accession>Q83HP8</accession>
<sequence>MRTLGGFTFPCDAPVFVRVDFNVPMDEVGTITDDLRIRASLPTIESLLGRGAPLILISHLGRPVKNEQQGFSLKPCAERLSEYIGVNVPLVDFLDLDTKLYGELTRHLDKSGIVLFENIRFFAEETSKAQADRRILAEQLAPFAGAYVNDAFGASHRRHASVYELAQAFSNKAAGFLIESEMQAFSHLASEAKRPYTVILGGAKLSDKLRLIENILPTVDRLLLCGGMAFTFLAAQGCETGKSLLEESFISEANKIIDFAKQNNVELILPVDVIEARSLTSPLGVVSKAESISYMGLDIGPETQSIFRNVIQDSKTVFWNGPAGLFENPSFSNGTRALLDALSSSSAFTFIGGGDTAAAVSLLGFDYGDFSHVSTGGGACLELLEGKILPALEVL</sequence>
<protein>
    <recommendedName>
        <fullName evidence="1">Phosphoglycerate kinase</fullName>
        <ecNumber evidence="1">2.7.2.3</ecNumber>
    </recommendedName>
</protein>
<evidence type="ECO:0000255" key="1">
    <source>
        <dbReference type="HAMAP-Rule" id="MF_00145"/>
    </source>
</evidence>
<keyword id="KW-0067">ATP-binding</keyword>
<keyword id="KW-0963">Cytoplasm</keyword>
<keyword id="KW-0324">Glycolysis</keyword>
<keyword id="KW-0418">Kinase</keyword>
<keyword id="KW-0547">Nucleotide-binding</keyword>
<keyword id="KW-0808">Transferase</keyword>
<reference key="1">
    <citation type="journal article" date="2003" name="Lancet">
        <title>Sequencing and analysis of the genome of the Whipple's disease bacterium Tropheryma whipplei.</title>
        <authorList>
            <person name="Bentley S.D."/>
            <person name="Maiwald M."/>
            <person name="Murphy L.D."/>
            <person name="Pallen M.J."/>
            <person name="Yeats C.A."/>
            <person name="Dover L.G."/>
            <person name="Norbertczak H.T."/>
            <person name="Besra G.S."/>
            <person name="Quail M.A."/>
            <person name="Harris D.E."/>
            <person name="von Herbay A."/>
            <person name="Goble A."/>
            <person name="Rutter S."/>
            <person name="Squares R."/>
            <person name="Squares S."/>
            <person name="Barrell B.G."/>
            <person name="Parkhill J."/>
            <person name="Relman D.A."/>
        </authorList>
    </citation>
    <scope>NUCLEOTIDE SEQUENCE [LARGE SCALE GENOMIC DNA]</scope>
    <source>
        <strain>TW08/27</strain>
    </source>
</reference>
<feature type="chain" id="PRO_0000146031" description="Phosphoglycerate kinase">
    <location>
        <begin position="1"/>
        <end position="395"/>
    </location>
</feature>
<feature type="binding site" evidence="1">
    <location>
        <begin position="20"/>
        <end position="22"/>
    </location>
    <ligand>
        <name>substrate</name>
    </ligand>
</feature>
<feature type="binding site" evidence="1">
    <location>
        <position position="36"/>
    </location>
    <ligand>
        <name>substrate</name>
    </ligand>
</feature>
<feature type="binding site" evidence="1">
    <location>
        <begin position="59"/>
        <end position="62"/>
    </location>
    <ligand>
        <name>substrate</name>
    </ligand>
</feature>
<feature type="binding site" evidence="1">
    <location>
        <position position="120"/>
    </location>
    <ligand>
        <name>substrate</name>
    </ligand>
</feature>
<feature type="binding site" evidence="1">
    <location>
        <position position="157"/>
    </location>
    <ligand>
        <name>substrate</name>
    </ligand>
</feature>
<feature type="binding site" evidence="1">
    <location>
        <position position="208"/>
    </location>
    <ligand>
        <name>ATP</name>
        <dbReference type="ChEBI" id="CHEBI:30616"/>
    </ligand>
</feature>
<feature type="binding site" evidence="1">
    <location>
        <position position="296"/>
    </location>
    <ligand>
        <name>ATP</name>
        <dbReference type="ChEBI" id="CHEBI:30616"/>
    </ligand>
</feature>
<feature type="binding site" evidence="1">
    <location>
        <position position="327"/>
    </location>
    <ligand>
        <name>ATP</name>
        <dbReference type="ChEBI" id="CHEBI:30616"/>
    </ligand>
</feature>
<feature type="binding site" evidence="1">
    <location>
        <begin position="353"/>
        <end position="356"/>
    </location>
    <ligand>
        <name>ATP</name>
        <dbReference type="ChEBI" id="CHEBI:30616"/>
    </ligand>
</feature>
<proteinExistence type="inferred from homology"/>
<dbReference type="EC" id="2.7.2.3" evidence="1"/>
<dbReference type="EMBL" id="BX251411">
    <property type="protein sequence ID" value="CAD67138.1"/>
    <property type="molecule type" value="Genomic_DNA"/>
</dbReference>
<dbReference type="RefSeq" id="WP_011096418.1">
    <property type="nucleotide sequence ID" value="NC_004551.1"/>
</dbReference>
<dbReference type="SMR" id="Q83HP8"/>
<dbReference type="GeneID" id="67388247"/>
<dbReference type="KEGG" id="tws:TW471"/>
<dbReference type="HOGENOM" id="CLU_025427_0_2_11"/>
<dbReference type="UniPathway" id="UPA00109">
    <property type="reaction ID" value="UER00185"/>
</dbReference>
<dbReference type="GO" id="GO:0005829">
    <property type="term" value="C:cytosol"/>
    <property type="evidence" value="ECO:0007669"/>
    <property type="project" value="TreeGrafter"/>
</dbReference>
<dbReference type="GO" id="GO:0043531">
    <property type="term" value="F:ADP binding"/>
    <property type="evidence" value="ECO:0007669"/>
    <property type="project" value="TreeGrafter"/>
</dbReference>
<dbReference type="GO" id="GO:0005524">
    <property type="term" value="F:ATP binding"/>
    <property type="evidence" value="ECO:0007669"/>
    <property type="project" value="UniProtKB-KW"/>
</dbReference>
<dbReference type="GO" id="GO:0004618">
    <property type="term" value="F:phosphoglycerate kinase activity"/>
    <property type="evidence" value="ECO:0007669"/>
    <property type="project" value="UniProtKB-UniRule"/>
</dbReference>
<dbReference type="GO" id="GO:0006094">
    <property type="term" value="P:gluconeogenesis"/>
    <property type="evidence" value="ECO:0007669"/>
    <property type="project" value="TreeGrafter"/>
</dbReference>
<dbReference type="GO" id="GO:0006096">
    <property type="term" value="P:glycolytic process"/>
    <property type="evidence" value="ECO:0007669"/>
    <property type="project" value="UniProtKB-UniRule"/>
</dbReference>
<dbReference type="FunFam" id="3.40.50.1260:FF:000031">
    <property type="entry name" value="Phosphoglycerate kinase 1"/>
    <property type="match status" value="1"/>
</dbReference>
<dbReference type="Gene3D" id="3.40.50.1260">
    <property type="entry name" value="Phosphoglycerate kinase, N-terminal domain"/>
    <property type="match status" value="2"/>
</dbReference>
<dbReference type="HAMAP" id="MF_00145">
    <property type="entry name" value="Phosphoglyc_kinase"/>
    <property type="match status" value="1"/>
</dbReference>
<dbReference type="InterPro" id="IPR001576">
    <property type="entry name" value="Phosphoglycerate_kinase"/>
</dbReference>
<dbReference type="InterPro" id="IPR015824">
    <property type="entry name" value="Phosphoglycerate_kinase_N"/>
</dbReference>
<dbReference type="InterPro" id="IPR036043">
    <property type="entry name" value="Phosphoglycerate_kinase_sf"/>
</dbReference>
<dbReference type="PANTHER" id="PTHR11406">
    <property type="entry name" value="PHOSPHOGLYCERATE KINASE"/>
    <property type="match status" value="1"/>
</dbReference>
<dbReference type="PANTHER" id="PTHR11406:SF23">
    <property type="entry name" value="PHOSPHOGLYCERATE KINASE 1, CHLOROPLASTIC-RELATED"/>
    <property type="match status" value="1"/>
</dbReference>
<dbReference type="Pfam" id="PF00162">
    <property type="entry name" value="PGK"/>
    <property type="match status" value="1"/>
</dbReference>
<dbReference type="PIRSF" id="PIRSF000724">
    <property type="entry name" value="Pgk"/>
    <property type="match status" value="1"/>
</dbReference>
<dbReference type="PRINTS" id="PR00477">
    <property type="entry name" value="PHGLYCKINASE"/>
</dbReference>
<dbReference type="SUPFAM" id="SSF53748">
    <property type="entry name" value="Phosphoglycerate kinase"/>
    <property type="match status" value="1"/>
</dbReference>
<gene>
    <name evidence="1" type="primary">pgk</name>
    <name type="ordered locus">TW471</name>
</gene>
<organism>
    <name type="scientific">Tropheryma whipplei (strain TW08/27)</name>
    <name type="common">Whipple's bacillus</name>
    <dbReference type="NCBI Taxonomy" id="218496"/>
    <lineage>
        <taxon>Bacteria</taxon>
        <taxon>Bacillati</taxon>
        <taxon>Actinomycetota</taxon>
        <taxon>Actinomycetes</taxon>
        <taxon>Micrococcales</taxon>
        <taxon>Tropherymataceae</taxon>
        <taxon>Tropheryma</taxon>
    </lineage>
</organism>
<name>PGK_TROW8</name>
<comment type="catalytic activity">
    <reaction evidence="1">
        <text>(2R)-3-phosphoglycerate + ATP = (2R)-3-phospho-glyceroyl phosphate + ADP</text>
        <dbReference type="Rhea" id="RHEA:14801"/>
        <dbReference type="ChEBI" id="CHEBI:30616"/>
        <dbReference type="ChEBI" id="CHEBI:57604"/>
        <dbReference type="ChEBI" id="CHEBI:58272"/>
        <dbReference type="ChEBI" id="CHEBI:456216"/>
        <dbReference type="EC" id="2.7.2.3"/>
    </reaction>
</comment>
<comment type="pathway">
    <text evidence="1">Carbohydrate degradation; glycolysis; pyruvate from D-glyceraldehyde 3-phosphate: step 2/5.</text>
</comment>
<comment type="subunit">
    <text evidence="1">Monomer.</text>
</comment>
<comment type="subcellular location">
    <subcellularLocation>
        <location evidence="1">Cytoplasm</location>
    </subcellularLocation>
</comment>
<comment type="similarity">
    <text evidence="1">Belongs to the phosphoglycerate kinase family.</text>
</comment>